<dbReference type="EMBL" id="AF148805">
    <property type="protein sequence ID" value="ABD28877.1"/>
    <property type="molecule type" value="Genomic_DNA"/>
</dbReference>
<dbReference type="RefSeq" id="YP_001129379.1">
    <property type="nucleotide sequence ID" value="NC_009333.1"/>
</dbReference>
<dbReference type="PDB" id="6PPB">
    <property type="method" value="EM"/>
    <property type="resolution" value="4.30 A"/>
    <property type="chains" value="6/7/c/d=1-305"/>
</dbReference>
<dbReference type="PDBsum" id="6PPB"/>
<dbReference type="SMR" id="F5HGN8"/>
<dbReference type="BioGRID" id="1777012">
    <property type="interactions" value="3"/>
</dbReference>
<dbReference type="DNASU" id="4961509"/>
<dbReference type="GeneID" id="4961509"/>
<dbReference type="KEGG" id="vg:4961509"/>
<dbReference type="Proteomes" id="UP000000942">
    <property type="component" value="Segment"/>
</dbReference>
<dbReference type="GO" id="GO:0042025">
    <property type="term" value="C:host cell nucleus"/>
    <property type="evidence" value="ECO:0007669"/>
    <property type="project" value="UniProtKB-SubCell"/>
</dbReference>
<dbReference type="GO" id="GO:0019028">
    <property type="term" value="C:viral capsid"/>
    <property type="evidence" value="ECO:0007669"/>
    <property type="project" value="UniProtKB-KW"/>
</dbReference>
<dbReference type="GO" id="GO:0005198">
    <property type="term" value="F:structural molecule activity"/>
    <property type="evidence" value="ECO:0007669"/>
    <property type="project" value="InterPro"/>
</dbReference>
<dbReference type="HAMAP" id="MF_04019">
    <property type="entry name" value="HSV_TRX2"/>
    <property type="match status" value="1"/>
</dbReference>
<dbReference type="InterPro" id="IPR002690">
    <property type="entry name" value="Herpes_capsid_2"/>
</dbReference>
<dbReference type="Pfam" id="PF01802">
    <property type="entry name" value="Herpes_V23"/>
    <property type="match status" value="1"/>
</dbReference>
<comment type="function">
    <text evidence="1">Structural component of the T=16 icosahedral capsid. The capsid is composed of pentamers and hexamers of major capsid protein/MCP, which are linked together by heterotrimers called triplexes. These triplexes are formed by a single molecule of triplex protein 1/TRX1 and two copies of triplex protein 2/TRX2. Additionally, TRX1 is required for efficient transport of TRX2 to the nucleus, which is the site of capsid assembly.</text>
</comment>
<comment type="subunit">
    <text evidence="1">Interacts with TRX1 and major capisd protein/MCP.</text>
</comment>
<comment type="subcellular location">
    <subcellularLocation>
        <location evidence="1">Virion</location>
    </subcellularLocation>
    <subcellularLocation>
        <location evidence="1">Host nucleus</location>
    </subcellularLocation>
</comment>
<comment type="similarity">
    <text evidence="1">Belongs to the herpesviridae TRX2 protein family.</text>
</comment>
<accession>F5HGN8</accession>
<protein>
    <recommendedName>
        <fullName evidence="1">Triplex capsid protein 2</fullName>
    </recommendedName>
</protein>
<name>TRX2_HHV8P</name>
<gene>
    <name evidence="1" type="primary">TRX2</name>
    <name type="ordered locus">ORF26</name>
</gene>
<sequence>MALDKSIVVNFTSRLFADELAALQSKIGSVLPLGDCHRLQNIQALGLGCVCSRETSPDYIQIMQYLSKCTLAVLEEVRPDSLRLTRMDPSDNLQIKNVYAPFFQWDSNTQLAVLPPFFSRKDSTIVLESNGFDLVFPMVVPQQLGHAILQQLLVYHIYSKISAGAPDDVNMAELDLYTTNVSFMGRTYRLDVDNTDPRTALRVLDDLSMYLCILSALVPRGCLRLLTALVRHDRHPLTEVFEGVVPDEVTRIDLDQLSVPDDITRMRVMFSYLQSLSSIFNLGPRLHVYAYSAETLAASCWYSPR</sequence>
<organismHost>
    <name type="scientific">Homo sapiens</name>
    <name type="common">Human</name>
    <dbReference type="NCBI Taxonomy" id="9606"/>
</organismHost>
<keyword id="KW-0002">3D-structure</keyword>
<keyword id="KW-0167">Capsid protein</keyword>
<keyword id="KW-1048">Host nucleus</keyword>
<keyword id="KW-1185">Reference proteome</keyword>
<keyword id="KW-0946">Virion</keyword>
<feature type="chain" id="PRO_0000423883" description="Triplex capsid protein 2">
    <location>
        <begin position="1"/>
        <end position="305"/>
    </location>
</feature>
<organism>
    <name type="scientific">Human herpesvirus 8 type P (isolate GK18)</name>
    <name type="common">HHV-8</name>
    <name type="synonym">Kaposi's sarcoma-associated herpesvirus</name>
    <dbReference type="NCBI Taxonomy" id="868565"/>
    <lineage>
        <taxon>Viruses</taxon>
        <taxon>Duplodnaviria</taxon>
        <taxon>Heunggongvirae</taxon>
        <taxon>Peploviricota</taxon>
        <taxon>Herviviricetes</taxon>
        <taxon>Herpesvirales</taxon>
        <taxon>Orthoherpesviridae</taxon>
        <taxon>Gammaherpesvirinae</taxon>
        <taxon>Rhadinovirus</taxon>
        <taxon>Rhadinovirus humangamma8</taxon>
        <taxon>Human herpesvirus 8</taxon>
    </lineage>
</organism>
<proteinExistence type="evidence at protein level"/>
<evidence type="ECO:0000255" key="1">
    <source>
        <dbReference type="HAMAP-Rule" id="MF_04019"/>
    </source>
</evidence>
<reference key="1">
    <citation type="journal article" date="1999" name="J. Virol.">
        <title>Identification of a spliced gene from Kaposi's sarcoma-associated herpesvirus encoding a protein with similarities to latent membrane proteins 1 and 2A of Epstein-Barr virus.</title>
        <authorList>
            <person name="Glenn M."/>
            <person name="Rainbow L."/>
            <person name="Aurade F."/>
            <person name="Davison A."/>
            <person name="Schulz T.F."/>
        </authorList>
    </citation>
    <scope>NUCLEOTIDE SEQUENCE [LARGE SCALE GENOMIC DNA]</scope>
</reference>
<reference key="2">
    <citation type="journal article" date="2006" name="J. Gen. Virol.">
        <title>Kaposi's sarcoma-associated herpesvirus immune modulation: an overview.</title>
        <authorList>
            <person name="Rezaee S.A.R."/>
            <person name="Cunningham C."/>
            <person name="Davison A.J."/>
            <person name="Blackbourn D.J."/>
        </authorList>
    </citation>
    <scope>NUCLEOTIDE SEQUENCE [LARGE SCALE GENOMIC DNA]</scope>
</reference>